<dbReference type="EMBL" id="AY210400">
    <property type="protein sequence ID" value="AAO48273.1"/>
    <property type="molecule type" value="mRNA"/>
</dbReference>
<dbReference type="EMBL" id="AC149091">
    <property type="status" value="NOT_ANNOTATED_CDS"/>
    <property type="molecule type" value="Genomic_DNA"/>
</dbReference>
<dbReference type="CCDS" id="CCDS52221.1"/>
<dbReference type="RefSeq" id="NP_766488.2">
    <property type="nucleotide sequence ID" value="NM_172900.3"/>
</dbReference>
<dbReference type="SMR" id="Q80ZE3"/>
<dbReference type="FunCoup" id="Q80ZE3">
    <property type="interactions" value="646"/>
</dbReference>
<dbReference type="IntAct" id="Q80ZE3">
    <property type="interactions" value="5"/>
</dbReference>
<dbReference type="STRING" id="10090.ENSMUSP00000005592"/>
<dbReference type="GlyCosmos" id="Q80ZE3">
    <property type="glycosylation" value="2 sites, No reported glycans"/>
</dbReference>
<dbReference type="GlyGen" id="Q80ZE3">
    <property type="glycosylation" value="4 sites, 2 N-linked glycans (2 sites)"/>
</dbReference>
<dbReference type="iPTMnet" id="Q80ZE3"/>
<dbReference type="PhosphoSitePlus" id="Q80ZE3"/>
<dbReference type="PaxDb" id="10090-ENSMUSP00000005592"/>
<dbReference type="ProteomicsDB" id="257177"/>
<dbReference type="DNASU" id="243958"/>
<dbReference type="Ensembl" id="ENSMUST00000005592.7">
    <property type="protein sequence ID" value="ENSMUSP00000005592.7"/>
    <property type="gene ID" value="ENSMUSG00000030468.13"/>
</dbReference>
<dbReference type="GeneID" id="243958"/>
<dbReference type="KEGG" id="mmu:243958"/>
<dbReference type="UCSC" id="uc009gmo.1">
    <property type="organism name" value="mouse"/>
</dbReference>
<dbReference type="AGR" id="MGI:2443630"/>
<dbReference type="CTD" id="243958"/>
<dbReference type="MGI" id="MGI:2443630">
    <property type="gene designation" value="Siglecg"/>
</dbReference>
<dbReference type="VEuPathDB" id="HostDB:ENSMUSG00000030468"/>
<dbReference type="eggNOG" id="ENOG502S41V">
    <property type="taxonomic scope" value="Eukaryota"/>
</dbReference>
<dbReference type="GeneTree" id="ENSGT01080000257333"/>
<dbReference type="HOGENOM" id="CLU_024444_5_1_1"/>
<dbReference type="InParanoid" id="Q80ZE3"/>
<dbReference type="OMA" id="DCSLMIR"/>
<dbReference type="OrthoDB" id="10039395at2759"/>
<dbReference type="PhylomeDB" id="Q80ZE3"/>
<dbReference type="TreeFam" id="TF332441"/>
<dbReference type="Reactome" id="R-MMU-198933">
    <property type="pathway name" value="Immunoregulatory interactions between a Lymphoid and a non-Lymphoid cell"/>
</dbReference>
<dbReference type="Reactome" id="R-MMU-2172127">
    <property type="pathway name" value="DAP12 interactions"/>
</dbReference>
<dbReference type="BioGRID-ORCS" id="243958">
    <property type="hits" value="1 hit in 77 CRISPR screens"/>
</dbReference>
<dbReference type="ChiTaRS" id="Siglecg">
    <property type="organism name" value="mouse"/>
</dbReference>
<dbReference type="PRO" id="PR:Q80ZE3"/>
<dbReference type="Proteomes" id="UP000000589">
    <property type="component" value="Chromosome 7"/>
</dbReference>
<dbReference type="RNAct" id="Q80ZE3">
    <property type="molecule type" value="protein"/>
</dbReference>
<dbReference type="Bgee" id="ENSMUSG00000030468">
    <property type="expression patterns" value="Expressed in mesenteric lymph node and 44 other cell types or tissues"/>
</dbReference>
<dbReference type="GO" id="GO:0005886">
    <property type="term" value="C:plasma membrane"/>
    <property type="evidence" value="ECO:0007669"/>
    <property type="project" value="UniProtKB-SubCell"/>
</dbReference>
<dbReference type="GO" id="GO:0030246">
    <property type="term" value="F:carbohydrate binding"/>
    <property type="evidence" value="ECO:0007669"/>
    <property type="project" value="UniProtKB-KW"/>
</dbReference>
<dbReference type="GO" id="GO:0002250">
    <property type="term" value="P:adaptive immune response"/>
    <property type="evidence" value="ECO:0007669"/>
    <property type="project" value="UniProtKB-KW"/>
</dbReference>
<dbReference type="GO" id="GO:0007155">
    <property type="term" value="P:cell adhesion"/>
    <property type="evidence" value="ECO:0007669"/>
    <property type="project" value="UniProtKB-KW"/>
</dbReference>
<dbReference type="GO" id="GO:0002244">
    <property type="term" value="P:hematopoietic progenitor cell differentiation"/>
    <property type="evidence" value="ECO:0000315"/>
    <property type="project" value="MGI"/>
</dbReference>
<dbReference type="GO" id="GO:0045087">
    <property type="term" value="P:innate immune response"/>
    <property type="evidence" value="ECO:0007669"/>
    <property type="project" value="UniProtKB-KW"/>
</dbReference>
<dbReference type="GO" id="GO:0050849">
    <property type="term" value="P:negative regulation of calcium-mediated signaling"/>
    <property type="evidence" value="ECO:0000316"/>
    <property type="project" value="ARUK-UCL"/>
</dbReference>
<dbReference type="GO" id="GO:0002638">
    <property type="term" value="P:negative regulation of immunoglobulin production"/>
    <property type="evidence" value="ECO:0000316"/>
    <property type="project" value="ARUK-UCL"/>
</dbReference>
<dbReference type="GO" id="GO:0106015">
    <property type="term" value="P:negative regulation of inflammatory response to wounding"/>
    <property type="evidence" value="ECO:0000353"/>
    <property type="project" value="UniProtKB"/>
</dbReference>
<dbReference type="GO" id="GO:0030888">
    <property type="term" value="P:regulation of B cell proliferation"/>
    <property type="evidence" value="ECO:0000315"/>
    <property type="project" value="ARUK-UCL"/>
</dbReference>
<dbReference type="GO" id="GO:0050776">
    <property type="term" value="P:regulation of immune response"/>
    <property type="evidence" value="ECO:0000316"/>
    <property type="project" value="ARUK-UCL"/>
</dbReference>
<dbReference type="FunFam" id="2.60.40.10:FF:000994">
    <property type="entry name" value="Sialic acid binding Ig like lectin 10"/>
    <property type="match status" value="1"/>
</dbReference>
<dbReference type="FunFam" id="2.60.40.10:FF:000829">
    <property type="entry name" value="Sialic acid-binding Ig-like lectin 8"/>
    <property type="match status" value="1"/>
</dbReference>
<dbReference type="Gene3D" id="2.60.40.10">
    <property type="entry name" value="Immunoglobulins"/>
    <property type="match status" value="4"/>
</dbReference>
<dbReference type="InterPro" id="IPR007110">
    <property type="entry name" value="Ig-like_dom"/>
</dbReference>
<dbReference type="InterPro" id="IPR036179">
    <property type="entry name" value="Ig-like_dom_sf"/>
</dbReference>
<dbReference type="InterPro" id="IPR013783">
    <property type="entry name" value="Ig-like_fold"/>
</dbReference>
<dbReference type="InterPro" id="IPR013098">
    <property type="entry name" value="Ig_I-set"/>
</dbReference>
<dbReference type="InterPro" id="IPR003599">
    <property type="entry name" value="Ig_sub"/>
</dbReference>
<dbReference type="InterPro" id="IPR003598">
    <property type="entry name" value="Ig_sub2"/>
</dbReference>
<dbReference type="InterPro" id="IPR013106">
    <property type="entry name" value="Ig_V-set"/>
</dbReference>
<dbReference type="InterPro" id="IPR051036">
    <property type="entry name" value="SIGLEC"/>
</dbReference>
<dbReference type="PANTHER" id="PTHR12035">
    <property type="entry name" value="SIALIC ACID BINDING IMMUNOGLOBULIN-LIKE LECTIN"/>
    <property type="match status" value="1"/>
</dbReference>
<dbReference type="PANTHER" id="PTHR12035:SF115">
    <property type="entry name" value="SIALIC ACID-BINDING IG-LIKE LECTIN 10"/>
    <property type="match status" value="1"/>
</dbReference>
<dbReference type="Pfam" id="PF07679">
    <property type="entry name" value="I-set"/>
    <property type="match status" value="1"/>
</dbReference>
<dbReference type="Pfam" id="PF13927">
    <property type="entry name" value="Ig_3"/>
    <property type="match status" value="1"/>
</dbReference>
<dbReference type="Pfam" id="PF07686">
    <property type="entry name" value="V-set"/>
    <property type="match status" value="1"/>
</dbReference>
<dbReference type="SMART" id="SM00409">
    <property type="entry name" value="IG"/>
    <property type="match status" value="4"/>
</dbReference>
<dbReference type="SMART" id="SM00408">
    <property type="entry name" value="IGc2"/>
    <property type="match status" value="2"/>
</dbReference>
<dbReference type="SUPFAM" id="SSF48726">
    <property type="entry name" value="Immunoglobulin"/>
    <property type="match status" value="4"/>
</dbReference>
<dbReference type="PROSITE" id="PS50835">
    <property type="entry name" value="IG_LIKE"/>
    <property type="match status" value="3"/>
</dbReference>
<feature type="signal peptide" evidence="3">
    <location>
        <begin position="1"/>
        <end position="17"/>
    </location>
</feature>
<feature type="chain" id="PRO_5010508953" description="Sialic acid-binding Ig-like lectin 10" evidence="3">
    <location>
        <begin position="18"/>
        <end position="688"/>
    </location>
</feature>
<feature type="topological domain" description="Extracellular" evidence="3">
    <location>
        <begin position="18"/>
        <end position="543"/>
    </location>
</feature>
<feature type="transmembrane region" description="Helical" evidence="3">
    <location>
        <begin position="544"/>
        <end position="564"/>
    </location>
</feature>
<feature type="topological domain" description="Cytoplasmic" evidence="3">
    <location>
        <begin position="565"/>
        <end position="688"/>
    </location>
</feature>
<feature type="domain" description="Ig-like V-type">
    <location>
        <begin position="26"/>
        <end position="138"/>
    </location>
</feature>
<feature type="domain" description="Ig-like C2-type 1" evidence="4">
    <location>
        <begin position="145"/>
        <end position="228"/>
    </location>
</feature>
<feature type="domain" description="Ig-like C2-type 2" evidence="4">
    <location>
        <begin position="250"/>
        <end position="334"/>
    </location>
</feature>
<feature type="domain" description="Ig-like C2-type 3" evidence="4">
    <location>
        <begin position="339"/>
        <end position="436"/>
    </location>
</feature>
<feature type="region of interest" description="Disordered" evidence="5">
    <location>
        <begin position="602"/>
        <end position="656"/>
    </location>
</feature>
<feature type="short sequence motif" description="ITIM motif 1" evidence="2">
    <location>
        <begin position="588"/>
        <end position="593"/>
    </location>
</feature>
<feature type="short sequence motif" description="ITIM motif 2" evidence="2">
    <location>
        <begin position="657"/>
        <end position="662"/>
    </location>
</feature>
<feature type="compositionally biased region" description="Polar residues" evidence="5">
    <location>
        <begin position="641"/>
        <end position="652"/>
    </location>
</feature>
<feature type="binding site" evidence="1">
    <location>
        <position position="120"/>
    </location>
    <ligand>
        <name>N-acetylneuraminate</name>
        <dbReference type="ChEBI" id="CHEBI:35418"/>
    </ligand>
</feature>
<feature type="modified residue" description="Phosphotyrosine" evidence="2">
    <location>
        <position position="659"/>
    </location>
</feature>
<feature type="glycosylation site" description="N-linked (GlcNAc...) asparagine" evidence="3">
    <location>
        <position position="195"/>
    </location>
</feature>
<feature type="glycosylation site" description="N-linked (GlcNAc...) asparagine" evidence="3">
    <location>
        <position position="246"/>
    </location>
</feature>
<feature type="disulfide bond" evidence="4">
    <location>
        <begin position="37"/>
        <end position="172"/>
    </location>
</feature>
<feature type="disulfide bond" evidence="4">
    <location>
        <begin position="42"/>
        <end position="102"/>
    </location>
</feature>
<feature type="disulfide bond" evidence="4">
    <location>
        <begin position="163"/>
        <end position="214"/>
    </location>
</feature>
<feature type="disulfide bond" evidence="4">
    <location>
        <begin position="271"/>
        <end position="318"/>
    </location>
</feature>
<feature type="disulfide bond" evidence="4">
    <location>
        <begin position="375"/>
        <end position="420"/>
    </location>
</feature>
<feature type="mutagenesis site" description="Decreases interaction with membrane IgM (with greater effect in B1a than in B2 cells)." evidence="11">
    <original>R</original>
    <variation>E</variation>
    <location>
        <position position="120"/>
    </location>
</feature>
<feature type="mutagenesis site" description="Decreases interaction with RIGI; when associated with F-635, F-659 and F-682." evidence="10">
    <original>Y</original>
    <variation>F</variation>
    <location>
        <position position="590"/>
    </location>
</feature>
<feature type="mutagenesis site" description="Decreases interaction with RIGI; when associated with F-590, F-659 and F-682." evidence="10">
    <original>Y</original>
    <variation>F</variation>
    <location>
        <position position="635"/>
    </location>
</feature>
<feature type="mutagenesis site" description="Decreases interaction with RIGI; when associated with F-590,F-635 and F-682." evidence="10">
    <original>Y</original>
    <variation>F</variation>
    <location>
        <position position="659"/>
    </location>
</feature>
<feature type="mutagenesis site" description="Decreases interaction with RIGI; when associated with F-590, F-635 and F-659." evidence="10">
    <original>Y</original>
    <variation>F</variation>
    <location>
        <position position="682"/>
    </location>
</feature>
<protein>
    <recommendedName>
        <fullName>Sialic acid-binding Ig-like lectin 10</fullName>
        <shortName>Siglec-10</shortName>
    </recommendedName>
    <alternativeName>
        <fullName>Sialic acid-binding Ig-like lectin G</fullName>
        <shortName>Siglec-G</shortName>
        <shortName>mSiglec-G</shortName>
    </alternativeName>
</protein>
<reference key="1">
    <citation type="journal article" date="2003" name="Genomics">
        <title>Molecular analysis of human Siglec-8 orthologs relevant to mouse eosinophils: identification of mouse orthologs of Siglec-5 (mSiglec-F) and Siglec-10 (mSiglec-G).</title>
        <authorList>
            <person name="Aizawa H."/>
            <person name="Zimmermann N."/>
            <person name="Carrigan P.E."/>
            <person name="Lee J.J."/>
            <person name="Rothenberg M.E."/>
            <person name="Bochner B.S."/>
        </authorList>
    </citation>
    <scope>NUCLEOTIDE SEQUENCE [MRNA]</scope>
    <source>
        <strain>BALB/cJ</strain>
    </source>
</reference>
<reference key="2">
    <citation type="journal article" date="2009" name="PLoS Biol.">
        <title>Lineage-specific biology revealed by a finished genome assembly of the mouse.</title>
        <authorList>
            <person name="Church D.M."/>
            <person name="Goodstadt L."/>
            <person name="Hillier L.W."/>
            <person name="Zody M.C."/>
            <person name="Goldstein S."/>
            <person name="She X."/>
            <person name="Bult C.J."/>
            <person name="Agarwala R."/>
            <person name="Cherry J.L."/>
            <person name="DiCuccio M."/>
            <person name="Hlavina W."/>
            <person name="Kapustin Y."/>
            <person name="Meric P."/>
            <person name="Maglott D."/>
            <person name="Birtle Z."/>
            <person name="Marques A.C."/>
            <person name="Graves T."/>
            <person name="Zhou S."/>
            <person name="Teague B."/>
            <person name="Potamousis K."/>
            <person name="Churas C."/>
            <person name="Place M."/>
            <person name="Herschleb J."/>
            <person name="Runnheim R."/>
            <person name="Forrest D."/>
            <person name="Amos-Landgraf J."/>
            <person name="Schwartz D.C."/>
            <person name="Cheng Z."/>
            <person name="Lindblad-Toh K."/>
            <person name="Eichler E.E."/>
            <person name="Ponting C.P."/>
        </authorList>
    </citation>
    <scope>NUCLEOTIDE SEQUENCE [LARGE SCALE GENOMIC DNA]</scope>
    <source>
        <strain>C57BL/6J</strain>
    </source>
</reference>
<reference key="3">
    <citation type="journal article" date="2007" name="Nat. Immunol.">
        <title>Siglec-G is a B1 cell-inhibitory receptor that controls expansion and calcium signaling of the B1 cell population.</title>
        <authorList>
            <person name="Hoffmann A."/>
            <person name="Kerr S."/>
            <person name="Jellusova J."/>
            <person name="Zhang J."/>
            <person name="Weisel F."/>
            <person name="Wellmann U."/>
            <person name="Winkler T.H."/>
            <person name="Kneitz B."/>
            <person name="Crocker P.R."/>
            <person name="Nitschke L."/>
        </authorList>
    </citation>
    <scope>FUNCTION</scope>
    <scope>TISSUE SPECIFICITY</scope>
</reference>
<reference key="4">
    <citation type="journal article" date="2009" name="Science">
        <title>CD24 and Siglec-10 selectively repress tissue damage-induced immune responses.</title>
        <authorList>
            <person name="Chen G.Y."/>
            <person name="Tang J."/>
            <person name="Zheng P."/>
            <person name="Liu Y."/>
        </authorList>
    </citation>
    <scope>FUNCTION</scope>
    <scope>INTERACTION WITH CD24 AND HMGB1</scope>
</reference>
<reference key="5">
    <citation type="journal article" date="2010" name="Cell">
        <title>A tissue-specific atlas of mouse protein phosphorylation and expression.</title>
        <authorList>
            <person name="Huttlin E.L."/>
            <person name="Jedrychowski M.P."/>
            <person name="Elias J.E."/>
            <person name="Goswami T."/>
            <person name="Rad R."/>
            <person name="Beausoleil S.A."/>
            <person name="Villen J."/>
            <person name="Haas W."/>
            <person name="Sowa M.E."/>
            <person name="Gygi S.P."/>
        </authorList>
    </citation>
    <scope>IDENTIFICATION BY MASS SPECTROMETRY [LARGE SCALE ANALYSIS]</scope>
    <source>
        <tissue>Spleen</tissue>
    </source>
</reference>
<reference key="6">
    <citation type="journal article" date="2010" name="J. Exp. Med.">
        <title>Decoration of T-independent antigen with ligands for CD22 and Siglec-G can suppress immunity and induce B cell tolerance in vivo.</title>
        <authorList>
            <person name="Duong B.H."/>
            <person name="Tian H."/>
            <person name="Ota T."/>
            <person name="Completo G."/>
            <person name="Han S."/>
            <person name="Vela J.L."/>
            <person name="Ota M."/>
            <person name="Kubitz M."/>
            <person name="Bovin N."/>
            <person name="Paulson J.C."/>
            <person name="Paulson J."/>
            <person name="Nemazee D."/>
        </authorList>
    </citation>
    <scope>FUNCTION</scope>
</reference>
<reference key="7">
    <citation type="journal article" date="2013" name="J. Immunol.">
        <title>Copresentation of antigen and ligands of Siglec-G induces B cell tolerance independent of CD22.</title>
        <authorList>
            <person name="Pfrengle F."/>
            <person name="Macauley M.S."/>
            <person name="Kawasaki N."/>
            <person name="Paulson J.C."/>
        </authorList>
    </citation>
    <scope>FUNCTION</scope>
</reference>
<reference key="8">
    <citation type="journal article" date="2010" name="J. Immunol.">
        <title>CD22 x Siglec-G double-deficient mice have massively increased B1 cell numbers and develop systemic autoimmunity.</title>
        <authorList>
            <person name="Jellusova J."/>
            <person name="Wellmann U."/>
            <person name="Amann K."/>
            <person name="Winkler T.H."/>
            <person name="Nitschke L."/>
        </authorList>
    </citation>
    <scope>FUNCTION</scope>
    <scope>DISRUPTION PHENOTYPE</scope>
</reference>
<reference key="9">
    <citation type="journal article" date="2013" name="Cell">
        <title>Induction of Siglec-G by RNA viruses inhibits the innate immune response by promoting RIG-I degradation.</title>
        <authorList>
            <person name="Chen W."/>
            <person name="Han C."/>
            <person name="Xie B."/>
            <person name="Hu X."/>
            <person name="Yu Q."/>
            <person name="Shi L."/>
            <person name="Wang Q."/>
            <person name="Li D."/>
            <person name="Wang J."/>
            <person name="Zheng P."/>
            <person name="Liu Y."/>
            <person name="Cao X."/>
        </authorList>
    </citation>
    <scope>FUNCTION</scope>
    <scope>INTERACTION WITH RIGI; CBL AND PTPN11</scope>
    <scope>MUTAGENESIS OF TYR-590; TYR-635; TYR-659 AND TYR-682</scope>
</reference>
<reference key="10">
    <citation type="journal article" date="2014" name="J. Immunol.">
        <title>The ligand-binding domain of Siglec-G is crucial for its selective inhibitory function on B1 cells.</title>
        <authorList>
            <person name="Hutzler S."/>
            <person name="Oezgoer L."/>
            <person name="Naito-Matsui Y."/>
            <person name="Klaesener K."/>
            <person name="Winkler T.H."/>
            <person name="Reth M."/>
            <person name="Nitschke L."/>
        </authorList>
    </citation>
    <scope>FUNCTION</scope>
    <scope>MUTAGENESIS OF ARG-120</scope>
    <scope>SUBUNIT</scope>
</reference>
<reference key="11">
    <citation type="journal article" date="2016" name="Nat. Immunol.">
        <title>The lectin Siglec-G inhibits dendritic cell cross-presentation by impairing MHC class I-peptide complex formation.</title>
        <authorList>
            <person name="Ding Y."/>
            <person name="Guo Z."/>
            <person name="Liu Y."/>
            <person name="Li X."/>
            <person name="Zhang Q."/>
            <person name="Xu X."/>
            <person name="Gu Y."/>
            <person name="Zhang Y."/>
            <person name="Zhao D."/>
            <person name="Cao X."/>
        </authorList>
    </citation>
    <scope>FUNCTION</scope>
    <scope>INTERACTION WITH PTPN6 AND NCF1</scope>
</reference>
<accession>Q80ZE3</accession>
<evidence type="ECO:0000250" key="1"/>
<evidence type="ECO:0000250" key="2">
    <source>
        <dbReference type="UniProtKB" id="Q96LC7"/>
    </source>
</evidence>
<evidence type="ECO:0000255" key="3"/>
<evidence type="ECO:0000255" key="4">
    <source>
        <dbReference type="PROSITE-ProRule" id="PRU00114"/>
    </source>
</evidence>
<evidence type="ECO:0000256" key="5">
    <source>
        <dbReference type="SAM" id="MobiDB-lite"/>
    </source>
</evidence>
<evidence type="ECO:0000269" key="6">
    <source>
    </source>
</evidence>
<evidence type="ECO:0000269" key="7">
    <source>
    </source>
</evidence>
<evidence type="ECO:0000269" key="8">
    <source>
    </source>
</evidence>
<evidence type="ECO:0000269" key="9">
    <source>
    </source>
</evidence>
<evidence type="ECO:0000269" key="10">
    <source>
    </source>
</evidence>
<evidence type="ECO:0000269" key="11">
    <source>
    </source>
</evidence>
<evidence type="ECO:0000269" key="12">
    <source>
    </source>
</evidence>
<evidence type="ECO:0000305" key="13"/>
<proteinExistence type="evidence at protein level"/>
<gene>
    <name type="primary">Siglec10</name>
    <name type="synonym">Siglecg</name>
</gene>
<organism>
    <name type="scientific">Mus musculus</name>
    <name type="common">Mouse</name>
    <dbReference type="NCBI Taxonomy" id="10090"/>
    <lineage>
        <taxon>Eukaryota</taxon>
        <taxon>Metazoa</taxon>
        <taxon>Chordata</taxon>
        <taxon>Craniata</taxon>
        <taxon>Vertebrata</taxon>
        <taxon>Euteleostomi</taxon>
        <taxon>Mammalia</taxon>
        <taxon>Eutheria</taxon>
        <taxon>Euarchontoglires</taxon>
        <taxon>Glires</taxon>
        <taxon>Rodentia</taxon>
        <taxon>Myomorpha</taxon>
        <taxon>Muroidea</taxon>
        <taxon>Muridae</taxon>
        <taxon>Murinae</taxon>
        <taxon>Mus</taxon>
        <taxon>Mus</taxon>
    </lineage>
</organism>
<keyword id="KW-1064">Adaptive immunity</keyword>
<keyword id="KW-0130">Cell adhesion</keyword>
<keyword id="KW-1003">Cell membrane</keyword>
<keyword id="KW-1015">Disulfide bond</keyword>
<keyword id="KW-0325">Glycoprotein</keyword>
<keyword id="KW-0391">Immunity</keyword>
<keyword id="KW-0393">Immunoglobulin domain</keyword>
<keyword id="KW-0399">Innate immunity</keyword>
<keyword id="KW-0430">Lectin</keyword>
<keyword id="KW-0472">Membrane</keyword>
<keyword id="KW-0597">Phosphoprotein</keyword>
<keyword id="KW-1185">Reference proteome</keyword>
<keyword id="KW-0732">Signal</keyword>
<keyword id="KW-0812">Transmembrane</keyword>
<keyword id="KW-1133">Transmembrane helix</keyword>
<name>SIG10_MOUSE</name>
<comment type="function">
    <text evidence="2 6 7 8 9 12">Putative adhesion molecule that mediates sialic-acid dependent binding to cells. Preferentially binds to alpha-2,3- or alpha-2,6-linked sialic acid (PubMed:20038598). The sialic acid recognition site may be masked by cis interactions with sialic acids on the same cell surface. In the immune response, seems to act as an inhibitory receptor upon ligand induced tyrosine phosphorylation by recruiting cytoplasmic phosphatase(s) via their SH2 domain(s) that block signal transduction through dephosphorylation of signaling molecules (By similarity). Involved in negative regulation of B-cell antigen receptor signaling and specifically acts on B1 cells to inhibit Ca(2+) signaling, cellular expansion and antibody secretion (PubMed:17572677). The inhibition of B cell activation is dependent on PTPN6/SHP-1 (PubMed:23836061). In association with CD24 may be involved in the selective suppression of the immune response to danger-associated molecular patterns (DAMPs) such as HMGB1, HSP70 and HSP90 (PubMed:19264983). In association with CD24 may regulate the immune repsonse of natural killer (NK) cells (By similarity). Plays a role in the control of autoimmunity (PubMed:20200274). During initiation of adaptive immune responses by CD8-alpha(+) dendritic cells inhibits cross-presentation by impairing the formation of MHC class I-peptide complexes. The function seems to implicate recruitment of PTPN6/SHP-1, which dephosphorylates NCF1 of the NADPH oxidase complex consequently promoting phagosomal acidification (PubMed:27548433).</text>
</comment>
<comment type="function">
    <text evidence="10">(Microbial infection) During infection by RNA viruses inhibits RIG-I signaling in macrophages by promoting its CBL-dependent ubiquitination and degradation via PTPN11/SHP-2.</text>
</comment>
<comment type="subunit">
    <text evidence="2 7 10 11 12">Interacts with PTPN6/SHP-1 upon phosphorylation. Interacts with NCF1 (PubMed:27548433). Interacts with CD24; the probable CD24:SIGLEC10 complex is proposed to inhibit HGMB1-mediated tissue damage immune response. Interacts with HMGB1; the interaction is dependent on CD24 (PubMed:19264983). Associates with membrane IgM on the B cell surface (PubMed:24790146). Interacts with RIGI, CBL and PTPN11 (PubMed:23374343).</text>
</comment>
<comment type="interaction">
    <interactant intactId="EBI-6841023">
        <id>Q80ZE3</id>
    </interactant>
    <interactant intactId="EBI-6841237">
        <id>Q6Q899</id>
        <label>Rigi</label>
    </interactant>
    <organismsDiffer>false</organismsDiffer>
    <experiments>7</experiments>
</comment>
<comment type="subcellular location">
    <subcellularLocation>
        <location evidence="2">Cell membrane</location>
        <topology>Single-pass type I membrane protein</topology>
    </subcellularLocation>
</comment>
<comment type="tissue specificity">
    <text evidence="6">Expressed in B cells with high levels in pre-B cells and B1a cells of the peritoneal cavity.</text>
</comment>
<comment type="domain">
    <text>Contains 1 copy of a cytoplasmic motif that is referred to as the immunoreceptor tyrosine-based inhibitor motif (ITIM). This motif is involved in modulation of cellular responses. The phosphorylated ITIM motif can bind the SH2 domain of several SH2-containing phosphatases.</text>
</comment>
<comment type="PTM">
    <text evidence="2">Phosphorylation of Tyr-659 is involved in binding to PTPN6.</text>
</comment>
<comment type="disruption phenotype">
    <text evidence="9">Cd22/Siglec10 double-deficient mice develop autoimmune disease, which is not observed in single-deficient mice.</text>
</comment>
<comment type="similarity">
    <text evidence="13">Belongs to the immunoglobulin superfamily. SIGLEC (sialic acid binding Ig-like lectin) family.</text>
</comment>
<sequence length="688" mass="76884">MSLLLFLLSFLLDGPQGQMESYFLQVQRIVKAQEGLCIFVPCSFSSPEGKWLNRSPLYGYWFKGIRKPSLSFPVATNNKDKVLEWEARGRFQLLGDISKKNCSLLIKDVQWGDSTNYFFRMERGFERFSFKEEFRLQVEALTQKPDIFIPEVLEPGEPVTVVCLFSWTFNQCPAPSFSWMGDAVSFQESRPHTSNYSVLSFIPGLQHHDTELTCQLDFSRMSTQRTVRLRVAYAPRSLAISIFHDNVSVPDLHENPSHLEVQQGQSLRLLCTADSQPPATLSWVLEDQVLSWSSPVGSRTLALELPWVKAGDSGHYTCQAENRLGSQQHTLDLSVLYPPQDLRVTVSQANRTVLEILRNAISLPVLEGQSLCLVCVTYSNPPANVSWAWVTQTLIPIQSSEPGVLELPLVQREHEGEFTCAAQNPLGAQRISLSLSVHYPPQMSSPSCSWEAKGLHCNCSSRAWPAPSLRWRLGEGLLEGNSSNASFTVTFSSLGPWVNSSLSLLQELGPSLWLSCESWNTHGAQTTSVLLLPDKDSATAFSKGAVLGFGITALLALCLIVVIVKTLQKKGTQEEPSRPKLSRGSTILDYINVVPKTRSLARNWKAEPDAPSRSSPLDTHFPKPKKKQKDPHFTYPGCPDPTSSSQVPVSENNPEELHYAALNFSRLRLQETQDPQDTYSDYTEVRVH</sequence>